<proteinExistence type="inferred from homology"/>
<sequence>MNLMLMGLPGAGKGTQAEKIVDAYHIPHISTGDMFRAAMADQTDLGVKAKAFIDKGELVPDDVTNGIVEERLSQADTNVGYLLDGFPRTLDQADALAVITDKLNKPLDGVINIDVDPEILADRLSGRFICKTCGATYHKLYHPTQVEGTCDRCGGHVFFQREDDKPETVKNRLKVNIEMNTPLLDFYEKRNLLYTVDGNQEIDDVFAAVKKVLDTIKD</sequence>
<protein>
    <recommendedName>
        <fullName evidence="1">Adenylate kinase</fullName>
        <shortName evidence="1">AK</shortName>
        <ecNumber evidence="1">2.7.4.3</ecNumber>
    </recommendedName>
    <alternativeName>
        <fullName evidence="1">ATP-AMP transphosphorylase</fullName>
    </alternativeName>
    <alternativeName>
        <fullName evidence="1">ATP:AMP phosphotransferase</fullName>
    </alternativeName>
    <alternativeName>
        <fullName evidence="1">Adenylate monophosphate kinase</fullName>
    </alternativeName>
</protein>
<reference key="1">
    <citation type="journal article" date="2005" name="Nat. Biotechnol.">
        <title>The complete genome sequence of the meat-borne lactic acid bacterium Lactobacillus sakei 23K.</title>
        <authorList>
            <person name="Chaillou S."/>
            <person name="Champomier-Verges M.-C."/>
            <person name="Cornet M."/>
            <person name="Crutz-Le Coq A.-M."/>
            <person name="Dudez A.-M."/>
            <person name="Martin V."/>
            <person name="Beaufils S."/>
            <person name="Darbon-Rongere E."/>
            <person name="Bossy R."/>
            <person name="Loux V."/>
            <person name="Zagorec M."/>
        </authorList>
    </citation>
    <scope>NUCLEOTIDE SEQUENCE [LARGE SCALE GENOMIC DNA]</scope>
    <source>
        <strain>23K</strain>
    </source>
</reference>
<dbReference type="EC" id="2.7.4.3" evidence="1"/>
<dbReference type="EMBL" id="CR936503">
    <property type="protein sequence ID" value="CAI56052.1"/>
    <property type="molecule type" value="Genomic_DNA"/>
</dbReference>
<dbReference type="RefSeq" id="WP_011375434.1">
    <property type="nucleotide sequence ID" value="NC_007576.1"/>
</dbReference>
<dbReference type="SMR" id="Q38UT2"/>
<dbReference type="STRING" id="314315.LCA_1744"/>
<dbReference type="KEGG" id="lsa:LCA_1744"/>
<dbReference type="eggNOG" id="COG0563">
    <property type="taxonomic scope" value="Bacteria"/>
</dbReference>
<dbReference type="HOGENOM" id="CLU_032354_1_2_9"/>
<dbReference type="OrthoDB" id="9805030at2"/>
<dbReference type="UniPathway" id="UPA00588">
    <property type="reaction ID" value="UER00649"/>
</dbReference>
<dbReference type="Proteomes" id="UP000002707">
    <property type="component" value="Chromosome"/>
</dbReference>
<dbReference type="GO" id="GO:0005737">
    <property type="term" value="C:cytoplasm"/>
    <property type="evidence" value="ECO:0007669"/>
    <property type="project" value="UniProtKB-SubCell"/>
</dbReference>
<dbReference type="GO" id="GO:0004017">
    <property type="term" value="F:adenylate kinase activity"/>
    <property type="evidence" value="ECO:0007669"/>
    <property type="project" value="UniProtKB-UniRule"/>
</dbReference>
<dbReference type="GO" id="GO:0005524">
    <property type="term" value="F:ATP binding"/>
    <property type="evidence" value="ECO:0007669"/>
    <property type="project" value="UniProtKB-UniRule"/>
</dbReference>
<dbReference type="GO" id="GO:0008270">
    <property type="term" value="F:zinc ion binding"/>
    <property type="evidence" value="ECO:0007669"/>
    <property type="project" value="UniProtKB-UniRule"/>
</dbReference>
<dbReference type="GO" id="GO:0044209">
    <property type="term" value="P:AMP salvage"/>
    <property type="evidence" value="ECO:0007669"/>
    <property type="project" value="UniProtKB-UniRule"/>
</dbReference>
<dbReference type="CDD" id="cd01428">
    <property type="entry name" value="ADK"/>
    <property type="match status" value="1"/>
</dbReference>
<dbReference type="FunFam" id="3.40.50.300:FF:000106">
    <property type="entry name" value="Adenylate kinase mitochondrial"/>
    <property type="match status" value="1"/>
</dbReference>
<dbReference type="Gene3D" id="3.40.50.300">
    <property type="entry name" value="P-loop containing nucleotide triphosphate hydrolases"/>
    <property type="match status" value="1"/>
</dbReference>
<dbReference type="HAMAP" id="MF_00235">
    <property type="entry name" value="Adenylate_kinase_Adk"/>
    <property type="match status" value="1"/>
</dbReference>
<dbReference type="InterPro" id="IPR006259">
    <property type="entry name" value="Adenyl_kin_sub"/>
</dbReference>
<dbReference type="InterPro" id="IPR000850">
    <property type="entry name" value="Adenylat/UMP-CMP_kin"/>
</dbReference>
<dbReference type="InterPro" id="IPR033690">
    <property type="entry name" value="Adenylat_kinase_CS"/>
</dbReference>
<dbReference type="InterPro" id="IPR007862">
    <property type="entry name" value="Adenylate_kinase_lid-dom"/>
</dbReference>
<dbReference type="InterPro" id="IPR027417">
    <property type="entry name" value="P-loop_NTPase"/>
</dbReference>
<dbReference type="NCBIfam" id="TIGR01351">
    <property type="entry name" value="adk"/>
    <property type="match status" value="1"/>
</dbReference>
<dbReference type="NCBIfam" id="NF001380">
    <property type="entry name" value="PRK00279.1-2"/>
    <property type="match status" value="1"/>
</dbReference>
<dbReference type="NCBIfam" id="NF001381">
    <property type="entry name" value="PRK00279.1-3"/>
    <property type="match status" value="1"/>
</dbReference>
<dbReference type="PANTHER" id="PTHR23359">
    <property type="entry name" value="NUCLEOTIDE KINASE"/>
    <property type="match status" value="1"/>
</dbReference>
<dbReference type="Pfam" id="PF00406">
    <property type="entry name" value="ADK"/>
    <property type="match status" value="1"/>
</dbReference>
<dbReference type="Pfam" id="PF05191">
    <property type="entry name" value="ADK_lid"/>
    <property type="match status" value="1"/>
</dbReference>
<dbReference type="PRINTS" id="PR00094">
    <property type="entry name" value="ADENYLTKNASE"/>
</dbReference>
<dbReference type="SUPFAM" id="SSF52540">
    <property type="entry name" value="P-loop containing nucleoside triphosphate hydrolases"/>
    <property type="match status" value="1"/>
</dbReference>
<dbReference type="PROSITE" id="PS00113">
    <property type="entry name" value="ADENYLATE_KINASE"/>
    <property type="match status" value="1"/>
</dbReference>
<organism>
    <name type="scientific">Latilactobacillus sakei subsp. sakei (strain 23K)</name>
    <name type="common">Lactobacillus sakei subsp. sakei</name>
    <dbReference type="NCBI Taxonomy" id="314315"/>
    <lineage>
        <taxon>Bacteria</taxon>
        <taxon>Bacillati</taxon>
        <taxon>Bacillota</taxon>
        <taxon>Bacilli</taxon>
        <taxon>Lactobacillales</taxon>
        <taxon>Lactobacillaceae</taxon>
        <taxon>Latilactobacillus</taxon>
    </lineage>
</organism>
<evidence type="ECO:0000255" key="1">
    <source>
        <dbReference type="HAMAP-Rule" id="MF_00235"/>
    </source>
</evidence>
<gene>
    <name evidence="1" type="primary">adk</name>
    <name type="ordered locus">LCA_1744</name>
</gene>
<keyword id="KW-0067">ATP-binding</keyword>
<keyword id="KW-0963">Cytoplasm</keyword>
<keyword id="KW-0418">Kinase</keyword>
<keyword id="KW-0479">Metal-binding</keyword>
<keyword id="KW-0545">Nucleotide biosynthesis</keyword>
<keyword id="KW-0547">Nucleotide-binding</keyword>
<keyword id="KW-1185">Reference proteome</keyword>
<keyword id="KW-0808">Transferase</keyword>
<keyword id="KW-0862">Zinc</keyword>
<comment type="function">
    <text evidence="1">Catalyzes the reversible transfer of the terminal phosphate group between ATP and AMP. Plays an important role in cellular energy homeostasis and in adenine nucleotide metabolism.</text>
</comment>
<comment type="catalytic activity">
    <reaction evidence="1">
        <text>AMP + ATP = 2 ADP</text>
        <dbReference type="Rhea" id="RHEA:12973"/>
        <dbReference type="ChEBI" id="CHEBI:30616"/>
        <dbReference type="ChEBI" id="CHEBI:456215"/>
        <dbReference type="ChEBI" id="CHEBI:456216"/>
        <dbReference type="EC" id="2.7.4.3"/>
    </reaction>
</comment>
<comment type="pathway">
    <text evidence="1">Purine metabolism; AMP biosynthesis via salvage pathway; AMP from ADP: step 1/1.</text>
</comment>
<comment type="subunit">
    <text evidence="1">Monomer.</text>
</comment>
<comment type="subcellular location">
    <subcellularLocation>
        <location evidence="1">Cytoplasm</location>
    </subcellularLocation>
</comment>
<comment type="domain">
    <text evidence="1">Consists of three domains, a large central CORE domain and two small peripheral domains, NMPbind and LID, which undergo movements during catalysis. The LID domain closes over the site of phosphoryl transfer upon ATP binding. Assembling and dissambling the active center during each catalytic cycle provides an effective means to prevent ATP hydrolysis. Some bacteria have evolved a zinc-coordinating structure that stabilizes the LID domain.</text>
</comment>
<comment type="similarity">
    <text evidence="1">Belongs to the adenylate kinase family.</text>
</comment>
<feature type="chain" id="PRO_1000021737" description="Adenylate kinase">
    <location>
        <begin position="1"/>
        <end position="218"/>
    </location>
</feature>
<feature type="region of interest" description="NMP" evidence="1">
    <location>
        <begin position="30"/>
        <end position="59"/>
    </location>
</feature>
<feature type="region of interest" description="LID" evidence="1">
    <location>
        <begin position="126"/>
        <end position="164"/>
    </location>
</feature>
<feature type="binding site" evidence="1">
    <location>
        <begin position="10"/>
        <end position="15"/>
    </location>
    <ligand>
        <name>ATP</name>
        <dbReference type="ChEBI" id="CHEBI:30616"/>
    </ligand>
</feature>
<feature type="binding site" evidence="1">
    <location>
        <position position="31"/>
    </location>
    <ligand>
        <name>AMP</name>
        <dbReference type="ChEBI" id="CHEBI:456215"/>
    </ligand>
</feature>
<feature type="binding site" evidence="1">
    <location>
        <position position="36"/>
    </location>
    <ligand>
        <name>AMP</name>
        <dbReference type="ChEBI" id="CHEBI:456215"/>
    </ligand>
</feature>
<feature type="binding site" evidence="1">
    <location>
        <begin position="57"/>
        <end position="59"/>
    </location>
    <ligand>
        <name>AMP</name>
        <dbReference type="ChEBI" id="CHEBI:456215"/>
    </ligand>
</feature>
<feature type="binding site" evidence="1">
    <location>
        <begin position="85"/>
        <end position="88"/>
    </location>
    <ligand>
        <name>AMP</name>
        <dbReference type="ChEBI" id="CHEBI:456215"/>
    </ligand>
</feature>
<feature type="binding site" evidence="1">
    <location>
        <position position="92"/>
    </location>
    <ligand>
        <name>AMP</name>
        <dbReference type="ChEBI" id="CHEBI:456215"/>
    </ligand>
</feature>
<feature type="binding site" evidence="1">
    <location>
        <position position="127"/>
    </location>
    <ligand>
        <name>ATP</name>
        <dbReference type="ChEBI" id="CHEBI:30616"/>
    </ligand>
</feature>
<feature type="binding site" evidence="1">
    <location>
        <position position="130"/>
    </location>
    <ligand>
        <name>Zn(2+)</name>
        <dbReference type="ChEBI" id="CHEBI:29105"/>
        <note>structural</note>
    </ligand>
</feature>
<feature type="binding site" evidence="1">
    <location>
        <position position="133"/>
    </location>
    <ligand>
        <name>Zn(2+)</name>
        <dbReference type="ChEBI" id="CHEBI:29105"/>
        <note>structural</note>
    </ligand>
</feature>
<feature type="binding site" evidence="1">
    <location>
        <begin position="136"/>
        <end position="137"/>
    </location>
    <ligand>
        <name>ATP</name>
        <dbReference type="ChEBI" id="CHEBI:30616"/>
    </ligand>
</feature>
<feature type="binding site" evidence="1">
    <location>
        <position position="150"/>
    </location>
    <ligand>
        <name>Zn(2+)</name>
        <dbReference type="ChEBI" id="CHEBI:29105"/>
        <note>structural</note>
    </ligand>
</feature>
<feature type="binding site" evidence="1">
    <location>
        <position position="153"/>
    </location>
    <ligand>
        <name>Zn(2+)</name>
        <dbReference type="ChEBI" id="CHEBI:29105"/>
        <note>structural</note>
    </ligand>
</feature>
<feature type="binding site" evidence="1">
    <location>
        <position position="161"/>
    </location>
    <ligand>
        <name>AMP</name>
        <dbReference type="ChEBI" id="CHEBI:456215"/>
    </ligand>
</feature>
<feature type="binding site" evidence="1">
    <location>
        <position position="172"/>
    </location>
    <ligand>
        <name>AMP</name>
        <dbReference type="ChEBI" id="CHEBI:456215"/>
    </ligand>
</feature>
<feature type="binding site" evidence="1">
    <location>
        <position position="200"/>
    </location>
    <ligand>
        <name>ATP</name>
        <dbReference type="ChEBI" id="CHEBI:30616"/>
    </ligand>
</feature>
<accession>Q38UT2</accession>
<name>KAD_LATSS</name>